<proteinExistence type="inferred from homology"/>
<comment type="catalytic activity">
    <reaction evidence="1">
        <text>1-(5-phospho-beta-D-ribosyl)-5-[(5-phospho-beta-D-ribosylamino)methylideneamino]imidazole-4-carboxamide = 5-[(5-phospho-1-deoxy-D-ribulos-1-ylimino)methylamino]-1-(5-phospho-beta-D-ribosyl)imidazole-4-carboxamide</text>
        <dbReference type="Rhea" id="RHEA:15469"/>
        <dbReference type="ChEBI" id="CHEBI:58435"/>
        <dbReference type="ChEBI" id="CHEBI:58525"/>
        <dbReference type="EC" id="5.3.1.16"/>
    </reaction>
</comment>
<comment type="pathway">
    <text evidence="1">Amino-acid biosynthesis; L-histidine biosynthesis; L-histidine from 5-phospho-alpha-D-ribose 1-diphosphate: step 4/9.</text>
</comment>
<comment type="subcellular location">
    <subcellularLocation>
        <location evidence="1">Cytoplasm</location>
    </subcellularLocation>
</comment>
<comment type="similarity">
    <text evidence="1">Belongs to the HisA/HisF family.</text>
</comment>
<organism>
    <name type="scientific">Lacticaseibacillus casei (strain BL23)</name>
    <name type="common">Lactobacillus casei</name>
    <dbReference type="NCBI Taxonomy" id="543734"/>
    <lineage>
        <taxon>Bacteria</taxon>
        <taxon>Bacillati</taxon>
        <taxon>Bacillota</taxon>
        <taxon>Bacilli</taxon>
        <taxon>Lactobacillales</taxon>
        <taxon>Lactobacillaceae</taxon>
        <taxon>Lacticaseibacillus</taxon>
    </lineage>
</organism>
<accession>B3WED2</accession>
<sequence>MKLYPAIDLLNGKSVRLTQGDYDQVSLTEDPLYQAQRLTDAGFAHLHLVDLDGARAQRPINRRIITRIREQTSAFIELGGGIRTLAAMEIYLTIGIDRLIVGSAAVSDPDLVEQAIARFGSNRIAVGIDTRAGKVATNGWLTTSQQTANALLTAMQQRGVTTFIVTDIAKDGMMQGPNAQLLADLQQAMPQATIIASGGVSSLADLRRLQTAGIQAAIIGKAWQTGAIELAMLKQMEG</sequence>
<name>HIS4_LACCB</name>
<keyword id="KW-0028">Amino-acid biosynthesis</keyword>
<keyword id="KW-0963">Cytoplasm</keyword>
<keyword id="KW-0368">Histidine biosynthesis</keyword>
<keyword id="KW-0413">Isomerase</keyword>
<feature type="chain" id="PRO_1000135126" description="1-(5-phosphoribosyl)-5-[(5-phosphoribosylamino)methylideneamino] imidazole-4-carboxamide isomerase">
    <location>
        <begin position="1"/>
        <end position="238"/>
    </location>
</feature>
<feature type="active site" description="Proton acceptor" evidence="1">
    <location>
        <position position="8"/>
    </location>
</feature>
<feature type="active site" description="Proton donor" evidence="1">
    <location>
        <position position="129"/>
    </location>
</feature>
<dbReference type="EC" id="5.3.1.16" evidence="1"/>
<dbReference type="EMBL" id="FM177140">
    <property type="protein sequence ID" value="CAQ66733.1"/>
    <property type="molecule type" value="Genomic_DNA"/>
</dbReference>
<dbReference type="SMR" id="B3WED2"/>
<dbReference type="KEGG" id="lcb:LCABL_16520"/>
<dbReference type="HOGENOM" id="CLU_048577_1_2_9"/>
<dbReference type="UniPathway" id="UPA00031">
    <property type="reaction ID" value="UER00009"/>
</dbReference>
<dbReference type="GO" id="GO:0005737">
    <property type="term" value="C:cytoplasm"/>
    <property type="evidence" value="ECO:0007669"/>
    <property type="project" value="UniProtKB-SubCell"/>
</dbReference>
<dbReference type="GO" id="GO:0003949">
    <property type="term" value="F:1-(5-phosphoribosyl)-5-[(5-phosphoribosylamino)methylideneamino]imidazole-4-carboxamide isomerase activity"/>
    <property type="evidence" value="ECO:0007669"/>
    <property type="project" value="UniProtKB-UniRule"/>
</dbReference>
<dbReference type="GO" id="GO:0000105">
    <property type="term" value="P:L-histidine biosynthetic process"/>
    <property type="evidence" value="ECO:0007669"/>
    <property type="project" value="UniProtKB-UniRule"/>
</dbReference>
<dbReference type="GO" id="GO:0000162">
    <property type="term" value="P:L-tryptophan biosynthetic process"/>
    <property type="evidence" value="ECO:0007669"/>
    <property type="project" value="TreeGrafter"/>
</dbReference>
<dbReference type="CDD" id="cd04732">
    <property type="entry name" value="HisA"/>
    <property type="match status" value="1"/>
</dbReference>
<dbReference type="FunFam" id="3.20.20.70:FF:000009">
    <property type="entry name" value="1-(5-phosphoribosyl)-5-[(5-phosphoribosylamino)methylideneamino] imidazole-4-carboxamide isomerase"/>
    <property type="match status" value="1"/>
</dbReference>
<dbReference type="Gene3D" id="3.20.20.70">
    <property type="entry name" value="Aldolase class I"/>
    <property type="match status" value="1"/>
</dbReference>
<dbReference type="HAMAP" id="MF_01014">
    <property type="entry name" value="HisA"/>
    <property type="match status" value="1"/>
</dbReference>
<dbReference type="InterPro" id="IPR013785">
    <property type="entry name" value="Aldolase_TIM"/>
</dbReference>
<dbReference type="InterPro" id="IPR006062">
    <property type="entry name" value="His_biosynth"/>
</dbReference>
<dbReference type="InterPro" id="IPR006063">
    <property type="entry name" value="HisA_bact_arch"/>
</dbReference>
<dbReference type="InterPro" id="IPR044524">
    <property type="entry name" value="Isoase_HisA-like"/>
</dbReference>
<dbReference type="InterPro" id="IPR023016">
    <property type="entry name" value="Isoase_HisA-like_bact"/>
</dbReference>
<dbReference type="InterPro" id="IPR011060">
    <property type="entry name" value="RibuloseP-bd_barrel"/>
</dbReference>
<dbReference type="NCBIfam" id="TIGR00007">
    <property type="entry name" value="1-(5-phosphoribosyl)-5-[(5-phosphoribosylamino)methylideneamino]imidazole-4-carboxamide isomerase"/>
    <property type="match status" value="1"/>
</dbReference>
<dbReference type="PANTHER" id="PTHR43090">
    <property type="entry name" value="1-(5-PHOSPHORIBOSYL)-5-[(5-PHOSPHORIBOSYLAMINO)METHYLIDENEAMINO] IMIDAZOLE-4-CARBOXAMIDE ISOMERASE"/>
    <property type="match status" value="1"/>
</dbReference>
<dbReference type="PANTHER" id="PTHR43090:SF2">
    <property type="entry name" value="1-(5-PHOSPHORIBOSYL)-5-[(5-PHOSPHORIBOSYLAMINO)METHYLIDENEAMINO] IMIDAZOLE-4-CARBOXAMIDE ISOMERASE"/>
    <property type="match status" value="1"/>
</dbReference>
<dbReference type="Pfam" id="PF00977">
    <property type="entry name" value="His_biosynth"/>
    <property type="match status" value="1"/>
</dbReference>
<dbReference type="SUPFAM" id="SSF51366">
    <property type="entry name" value="Ribulose-phoshate binding barrel"/>
    <property type="match status" value="1"/>
</dbReference>
<gene>
    <name evidence="1" type="primary">hisA</name>
    <name type="ordered locus">LCABL_16520</name>
</gene>
<reference key="1">
    <citation type="submission" date="2008-06" db="EMBL/GenBank/DDBJ databases">
        <title>Lactobacillus casei BL23 complete genome sequence.</title>
        <authorList>
            <person name="Maze A."/>
            <person name="Boel G."/>
            <person name="Bourand A."/>
            <person name="Loux V."/>
            <person name="Gibrat J.F."/>
            <person name="Zuniga M."/>
            <person name="Hartke A."/>
            <person name="Deutscher J."/>
        </authorList>
    </citation>
    <scope>NUCLEOTIDE SEQUENCE [LARGE SCALE GENOMIC DNA]</scope>
    <source>
        <strain>BL23</strain>
    </source>
</reference>
<evidence type="ECO:0000255" key="1">
    <source>
        <dbReference type="HAMAP-Rule" id="MF_01014"/>
    </source>
</evidence>
<protein>
    <recommendedName>
        <fullName evidence="1">1-(5-phosphoribosyl)-5-[(5-phosphoribosylamino)methylideneamino] imidazole-4-carboxamide isomerase</fullName>
        <ecNumber evidence="1">5.3.1.16</ecNumber>
    </recommendedName>
    <alternativeName>
        <fullName evidence="1">Phosphoribosylformimino-5-aminoimidazole carboxamide ribotide isomerase</fullName>
    </alternativeName>
</protein>